<organism>
    <name type="scientific">Choristoneura fumiferana nuclear polyhedrosis virus</name>
    <name type="common">CfMNPV</name>
    <dbReference type="NCBI Taxonomy" id="208973"/>
    <lineage>
        <taxon>Viruses</taxon>
        <taxon>Viruses incertae sedis</taxon>
        <taxon>Naldaviricetes</taxon>
        <taxon>Lefavirales</taxon>
        <taxon>Baculoviridae</taxon>
        <taxon>Alphabaculovirus</taxon>
        <taxon>Alphabaculovirus chofumiferanae</taxon>
    </lineage>
</organism>
<name>TATR_NPVCF</name>
<protein>
    <recommendedName>
        <fullName>Trans-activating transcriptional regulatory protein</fullName>
    </recommendedName>
    <alternativeName>
        <fullName>Immediate early protein 1</fullName>
        <shortName>IE-1</shortName>
    </alternativeName>
</protein>
<organismHost>
    <name type="scientific">Choristoneura fumiferana</name>
    <name type="common">Spruce budworm moth</name>
    <name type="synonym">Archips fumiferana</name>
    <dbReference type="NCBI Taxonomy" id="7141"/>
</organismHost>
<dbReference type="EMBL" id="L04945">
    <property type="protein sequence ID" value="AAA46697.1"/>
    <property type="molecule type" value="Genomic_DNA"/>
</dbReference>
<dbReference type="RefSeq" id="NP_848451.1">
    <property type="nucleotide sequence ID" value="NC_004778.3"/>
</dbReference>
<dbReference type="SMR" id="P41716"/>
<dbReference type="KEGG" id="vg:1482723"/>
<dbReference type="OrthoDB" id="2402at10239"/>
<dbReference type="GO" id="GO:0019079">
    <property type="term" value="P:viral genome replication"/>
    <property type="evidence" value="ECO:0000250"/>
    <property type="project" value="UniProtKB"/>
</dbReference>
<dbReference type="InterPro" id="IPR005092">
    <property type="entry name" value="TATR"/>
</dbReference>
<dbReference type="Pfam" id="PF03430">
    <property type="entry name" value="TATR"/>
    <property type="match status" value="1"/>
</dbReference>
<keyword id="KW-0244">Early protein</keyword>
<keyword id="KW-0804">Transcription</keyword>
<keyword id="KW-0805">Transcription regulation</keyword>
<comment type="function">
    <text>Regulatory transcriptional protein, which trans-activates gene expression from early baculovirus promoters. Can also trans-activate its own promoter, suggesting that it is autoregulated during normal infection of insect cells.</text>
</comment>
<comment type="similarity">
    <text evidence="2">Belongs to the nucleopolyhedrovirus IE-1 protein family.</text>
</comment>
<sequence>MPKNMAALQQSLYTGPSTPSHTQFSRSTEFPENLNFDVLNDSYETFSSVSLTTAEQDNQIDKILQESAAMNRDVNSELAQFTASEYVTGFRADTMEPEVIVETIGDSMKRKASELDSDSDSGESSKGKKRVIKPKMRQRYKKATIQNKTSLTEECNYNTEICTVAPTDQIAEYFKHDFSVYLEKQKSDCQMSANRFSDYISETGYYVFVVKKSEHKPFEVVFAKFVNNVTNEYTNNYYMVDNRVFVVSLNNVKFMVSYKLVREQGIDIPPHVNLCDDAQAERNPYDCYFEPVKNVFQTTLINHFHLDMYYSQTTFVTLMQSMGESKSGMLLNKLYQMFQDRSLFTLPIMLSRKEPTIENTPLSRNYTSSYVAQIIKYSKNVRFPENNPDNGVISRLEEIVTQKSSLTYKYSSVANLLFSRYGHQRDNNADSLKKVKKEDGNRLLVEQYMSQNENDETSHNFIVLQFGGVNDERLTIAKKGIEFFWIAAEIKDINVDDLVKKYTRNVHHVFRIINVNRRESTTWHNNLLKLLQLLLQNLIRIDDVQQYSNKGDSKFIYKRL</sequence>
<accession>P41716</accession>
<gene>
    <name type="primary">IE1</name>
</gene>
<proteinExistence type="inferred from homology"/>
<evidence type="ECO:0000256" key="1">
    <source>
        <dbReference type="SAM" id="MobiDB-lite"/>
    </source>
</evidence>
<evidence type="ECO:0000305" key="2"/>
<feature type="chain" id="PRO_0000132850" description="Trans-activating transcriptional regulatory protein">
    <location>
        <begin position="1"/>
        <end position="560"/>
    </location>
</feature>
<feature type="region of interest" description="Disordered" evidence="1">
    <location>
        <begin position="106"/>
        <end position="133"/>
    </location>
</feature>
<reference key="1">
    <citation type="submission" date="1992-10" db="EMBL/GenBank/DDBJ databases">
        <title>Sequence and functional analysis of Choristoneura fumiferana nuclear polyhedrosis virus IE1 gene and HR1 enhancer element.</title>
        <authorList>
            <person name="Kuzio J."/>
            <person name="Schodella E."/>
            <person name="Faulkner P."/>
        </authorList>
    </citation>
    <scope>NUCLEOTIDE SEQUENCE [GENOMIC DNA]</scope>
</reference>